<gene>
    <name evidence="1" type="primary">mltG</name>
    <name type="synonym">yrrL</name>
    <name type="ordered locus">BSU27370</name>
</gene>
<organism>
    <name type="scientific">Bacillus subtilis (strain 168)</name>
    <dbReference type="NCBI Taxonomy" id="224308"/>
    <lineage>
        <taxon>Bacteria</taxon>
        <taxon>Bacillati</taxon>
        <taxon>Bacillota</taxon>
        <taxon>Bacilli</taxon>
        <taxon>Bacillales</taxon>
        <taxon>Bacillaceae</taxon>
        <taxon>Bacillus</taxon>
    </lineage>
</organism>
<reference key="1">
    <citation type="journal article" date="1997" name="Nature">
        <title>The complete genome sequence of the Gram-positive bacterium Bacillus subtilis.</title>
        <authorList>
            <person name="Kunst F."/>
            <person name="Ogasawara N."/>
            <person name="Moszer I."/>
            <person name="Albertini A.M."/>
            <person name="Alloni G."/>
            <person name="Azevedo V."/>
            <person name="Bertero M.G."/>
            <person name="Bessieres P."/>
            <person name="Bolotin A."/>
            <person name="Borchert S."/>
            <person name="Borriss R."/>
            <person name="Boursier L."/>
            <person name="Brans A."/>
            <person name="Braun M."/>
            <person name="Brignell S.C."/>
            <person name="Bron S."/>
            <person name="Brouillet S."/>
            <person name="Bruschi C.V."/>
            <person name="Caldwell B."/>
            <person name="Capuano V."/>
            <person name="Carter N.M."/>
            <person name="Choi S.-K."/>
            <person name="Codani J.-J."/>
            <person name="Connerton I.F."/>
            <person name="Cummings N.J."/>
            <person name="Daniel R.A."/>
            <person name="Denizot F."/>
            <person name="Devine K.M."/>
            <person name="Duesterhoeft A."/>
            <person name="Ehrlich S.D."/>
            <person name="Emmerson P.T."/>
            <person name="Entian K.-D."/>
            <person name="Errington J."/>
            <person name="Fabret C."/>
            <person name="Ferrari E."/>
            <person name="Foulger D."/>
            <person name="Fritz C."/>
            <person name="Fujita M."/>
            <person name="Fujita Y."/>
            <person name="Fuma S."/>
            <person name="Galizzi A."/>
            <person name="Galleron N."/>
            <person name="Ghim S.-Y."/>
            <person name="Glaser P."/>
            <person name="Goffeau A."/>
            <person name="Golightly E.J."/>
            <person name="Grandi G."/>
            <person name="Guiseppi G."/>
            <person name="Guy B.J."/>
            <person name="Haga K."/>
            <person name="Haiech J."/>
            <person name="Harwood C.R."/>
            <person name="Henaut A."/>
            <person name="Hilbert H."/>
            <person name="Holsappel S."/>
            <person name="Hosono S."/>
            <person name="Hullo M.-F."/>
            <person name="Itaya M."/>
            <person name="Jones L.-M."/>
            <person name="Joris B."/>
            <person name="Karamata D."/>
            <person name="Kasahara Y."/>
            <person name="Klaerr-Blanchard M."/>
            <person name="Klein C."/>
            <person name="Kobayashi Y."/>
            <person name="Koetter P."/>
            <person name="Koningstein G."/>
            <person name="Krogh S."/>
            <person name="Kumano M."/>
            <person name="Kurita K."/>
            <person name="Lapidus A."/>
            <person name="Lardinois S."/>
            <person name="Lauber J."/>
            <person name="Lazarevic V."/>
            <person name="Lee S.-M."/>
            <person name="Levine A."/>
            <person name="Liu H."/>
            <person name="Masuda S."/>
            <person name="Mauel C."/>
            <person name="Medigue C."/>
            <person name="Medina N."/>
            <person name="Mellado R.P."/>
            <person name="Mizuno M."/>
            <person name="Moestl D."/>
            <person name="Nakai S."/>
            <person name="Noback M."/>
            <person name="Noone D."/>
            <person name="O'Reilly M."/>
            <person name="Ogawa K."/>
            <person name="Ogiwara A."/>
            <person name="Oudega B."/>
            <person name="Park S.-H."/>
            <person name="Parro V."/>
            <person name="Pohl T.M."/>
            <person name="Portetelle D."/>
            <person name="Porwollik S."/>
            <person name="Prescott A.M."/>
            <person name="Presecan E."/>
            <person name="Pujic P."/>
            <person name="Purnelle B."/>
            <person name="Rapoport G."/>
            <person name="Rey M."/>
            <person name="Reynolds S."/>
            <person name="Rieger M."/>
            <person name="Rivolta C."/>
            <person name="Rocha E."/>
            <person name="Roche B."/>
            <person name="Rose M."/>
            <person name="Sadaie Y."/>
            <person name="Sato T."/>
            <person name="Scanlan E."/>
            <person name="Schleich S."/>
            <person name="Schroeter R."/>
            <person name="Scoffone F."/>
            <person name="Sekiguchi J."/>
            <person name="Sekowska A."/>
            <person name="Seror S.J."/>
            <person name="Serror P."/>
            <person name="Shin B.-S."/>
            <person name="Soldo B."/>
            <person name="Sorokin A."/>
            <person name="Tacconi E."/>
            <person name="Takagi T."/>
            <person name="Takahashi H."/>
            <person name="Takemaru K."/>
            <person name="Takeuchi M."/>
            <person name="Tamakoshi A."/>
            <person name="Tanaka T."/>
            <person name="Terpstra P."/>
            <person name="Tognoni A."/>
            <person name="Tosato V."/>
            <person name="Uchiyama S."/>
            <person name="Vandenbol M."/>
            <person name="Vannier F."/>
            <person name="Vassarotti A."/>
            <person name="Viari A."/>
            <person name="Wambutt R."/>
            <person name="Wedler E."/>
            <person name="Wedler H."/>
            <person name="Weitzenegger T."/>
            <person name="Winters P."/>
            <person name="Wipat A."/>
            <person name="Yamamoto H."/>
            <person name="Yamane K."/>
            <person name="Yasumoto K."/>
            <person name="Yata K."/>
            <person name="Yoshida K."/>
            <person name="Yoshikawa H.-F."/>
            <person name="Zumstein E."/>
            <person name="Yoshikawa H."/>
            <person name="Danchin A."/>
        </authorList>
    </citation>
    <scope>NUCLEOTIDE SEQUENCE [LARGE SCALE GENOMIC DNA]</scope>
    <source>
        <strain>168</strain>
    </source>
</reference>
<keyword id="KW-1003">Cell membrane</keyword>
<keyword id="KW-0961">Cell wall biogenesis/degradation</keyword>
<keyword id="KW-0456">Lyase</keyword>
<keyword id="KW-0472">Membrane</keyword>
<keyword id="KW-1185">Reference proteome</keyword>
<keyword id="KW-0812">Transmembrane</keyword>
<keyword id="KW-1133">Transmembrane helix</keyword>
<proteinExistence type="inferred from homology"/>
<sequence length="360" mass="40502">MYINQQKKSFFNKKRIILSSIVVLFLIIGGAFLYGKSLLEPVEKDSKTTVNINIPSGSSVSAIASILKKNDVIKSEKAFQYYVKYKGASGFQAGFYHLNKGMDLDAIIQKLTSGATGYAFQITVTEGAQLTQIAAAIADETKYSKKQVIAKLDDETFINQLKKEFPDTVTNDVFNKNIKHPLEGYLFPATYPFNDPDTSLEDIIKAMIKQTNSYVETYKSEMKKNKVSVHKLLTMASLIEEEATEKADRHKIASVFYNRLKKKMPLQTDPTVLYAAGKHKDRVLYKDLEIDSPYNTYKNTGLTPGPIANAGMSSWEAALHPDKTDYLYFLAKSNGEVVFTKTLKEHNKAKEKYISSKNEK</sequence>
<protein>
    <recommendedName>
        <fullName evidence="1">Endolytic murein transglycosylase</fullName>
        <ecNumber evidence="1">4.2.2.29</ecNumber>
    </recommendedName>
    <alternativeName>
        <fullName evidence="1">Peptidoglycan lytic transglycosylase</fullName>
    </alternativeName>
    <alternativeName>
        <fullName evidence="1">Peptidoglycan polymerization terminase</fullName>
    </alternativeName>
</protein>
<dbReference type="EC" id="4.2.2.29" evidence="1"/>
<dbReference type="EMBL" id="AL009126">
    <property type="protein sequence ID" value="CAB14679.1"/>
    <property type="molecule type" value="Genomic_DNA"/>
</dbReference>
<dbReference type="PIR" id="E69979">
    <property type="entry name" value="E69979"/>
</dbReference>
<dbReference type="RefSeq" id="NP_390615.1">
    <property type="nucleotide sequence ID" value="NC_000964.3"/>
</dbReference>
<dbReference type="RefSeq" id="WP_003229799.1">
    <property type="nucleotide sequence ID" value="NZ_OZ025638.1"/>
</dbReference>
<dbReference type="SMR" id="O34758"/>
<dbReference type="FunCoup" id="O34758">
    <property type="interactions" value="467"/>
</dbReference>
<dbReference type="STRING" id="224308.BSU27370"/>
<dbReference type="PaxDb" id="224308-BSU27370"/>
<dbReference type="EnsemblBacteria" id="CAB14679">
    <property type="protein sequence ID" value="CAB14679"/>
    <property type="gene ID" value="BSU_27370"/>
</dbReference>
<dbReference type="GeneID" id="936260"/>
<dbReference type="KEGG" id="bsu:BSU27370"/>
<dbReference type="PATRIC" id="fig|224308.179.peg.2973"/>
<dbReference type="eggNOG" id="COG1559">
    <property type="taxonomic scope" value="Bacteria"/>
</dbReference>
<dbReference type="InParanoid" id="O34758"/>
<dbReference type="OrthoDB" id="9814591at2"/>
<dbReference type="PhylomeDB" id="O34758"/>
<dbReference type="BioCyc" id="BSUB:BSU27370-MONOMER"/>
<dbReference type="Proteomes" id="UP000001570">
    <property type="component" value="Chromosome"/>
</dbReference>
<dbReference type="GO" id="GO:0005886">
    <property type="term" value="C:plasma membrane"/>
    <property type="evidence" value="ECO:0007669"/>
    <property type="project" value="UniProtKB-SubCell"/>
</dbReference>
<dbReference type="GO" id="GO:0008932">
    <property type="term" value="F:lytic endotransglycosylase activity"/>
    <property type="evidence" value="ECO:0007669"/>
    <property type="project" value="UniProtKB-UniRule"/>
</dbReference>
<dbReference type="GO" id="GO:0071555">
    <property type="term" value="P:cell wall organization"/>
    <property type="evidence" value="ECO:0007669"/>
    <property type="project" value="UniProtKB-KW"/>
</dbReference>
<dbReference type="GO" id="GO:0009252">
    <property type="term" value="P:peptidoglycan biosynthetic process"/>
    <property type="evidence" value="ECO:0007669"/>
    <property type="project" value="UniProtKB-UniRule"/>
</dbReference>
<dbReference type="CDD" id="cd08010">
    <property type="entry name" value="MltG_like"/>
    <property type="match status" value="1"/>
</dbReference>
<dbReference type="FunFam" id="3.30.160.60:FF:000242">
    <property type="entry name" value="Endolytic murein transglycosylase"/>
    <property type="match status" value="1"/>
</dbReference>
<dbReference type="Gene3D" id="3.30.160.60">
    <property type="entry name" value="Classic Zinc Finger"/>
    <property type="match status" value="1"/>
</dbReference>
<dbReference type="Gene3D" id="3.30.1490.480">
    <property type="entry name" value="Endolytic murein transglycosylase"/>
    <property type="match status" value="1"/>
</dbReference>
<dbReference type="HAMAP" id="MF_02065">
    <property type="entry name" value="MltG"/>
    <property type="match status" value="1"/>
</dbReference>
<dbReference type="InterPro" id="IPR003770">
    <property type="entry name" value="MLTG-like"/>
</dbReference>
<dbReference type="NCBIfam" id="TIGR00247">
    <property type="entry name" value="endolytic transglycosylase MltG"/>
    <property type="match status" value="1"/>
</dbReference>
<dbReference type="PANTHER" id="PTHR30518">
    <property type="entry name" value="ENDOLYTIC MUREIN TRANSGLYCOSYLASE"/>
    <property type="match status" value="1"/>
</dbReference>
<dbReference type="PANTHER" id="PTHR30518:SF2">
    <property type="entry name" value="ENDOLYTIC MUREIN TRANSGLYCOSYLASE"/>
    <property type="match status" value="1"/>
</dbReference>
<dbReference type="Pfam" id="PF02618">
    <property type="entry name" value="YceG"/>
    <property type="match status" value="1"/>
</dbReference>
<evidence type="ECO:0000255" key="1">
    <source>
        <dbReference type="HAMAP-Rule" id="MF_02065"/>
    </source>
</evidence>
<feature type="chain" id="PRO_0000388727" description="Endolytic murein transglycosylase">
    <location>
        <begin position="1"/>
        <end position="360"/>
    </location>
</feature>
<feature type="transmembrane region" description="Helical" evidence="1">
    <location>
        <begin position="16"/>
        <end position="36"/>
    </location>
</feature>
<feature type="site" description="Important for catalytic activity" evidence="1">
    <location>
        <position position="242"/>
    </location>
</feature>
<name>MLTG_BACSU</name>
<comment type="function">
    <text evidence="1">Functions as a peptidoglycan terminase that cleaves nascent peptidoglycan strands endolytically to terminate their elongation.</text>
</comment>
<comment type="catalytic activity">
    <reaction evidence="1">
        <text>a peptidoglycan chain = a peptidoglycan chain with N-acetyl-1,6-anhydromuramyl-[peptide] at the reducing end + a peptidoglycan chain with N-acetylglucosamine at the non-reducing end.</text>
        <dbReference type="EC" id="4.2.2.29"/>
    </reaction>
</comment>
<comment type="subcellular location">
    <subcellularLocation>
        <location evidence="1">Cell membrane</location>
        <topology evidence="1">Single-pass membrane protein</topology>
    </subcellularLocation>
</comment>
<comment type="similarity">
    <text evidence="1">Belongs to the transglycosylase MltG family.</text>
</comment>
<accession>O34758</accession>